<protein>
    <recommendedName>
        <fullName evidence="1">Siroheme synthase</fullName>
    </recommendedName>
    <domain>
        <recommendedName>
            <fullName evidence="1">Uroporphyrinogen-III C-methyltransferase</fullName>
            <shortName evidence="1">Urogen III methylase</shortName>
            <ecNumber evidence="1">2.1.1.107</ecNumber>
        </recommendedName>
        <alternativeName>
            <fullName evidence="1">SUMT</fullName>
        </alternativeName>
        <alternativeName>
            <fullName evidence="1">Uroporphyrinogen III methylase</fullName>
            <shortName evidence="1">UROM</shortName>
        </alternativeName>
    </domain>
    <domain>
        <recommendedName>
            <fullName evidence="1">Precorrin-2 dehydrogenase</fullName>
            <ecNumber evidence="1">1.3.1.76</ecNumber>
        </recommendedName>
    </domain>
    <domain>
        <recommendedName>
            <fullName evidence="1">Sirohydrochlorin ferrochelatase</fullName>
            <ecNumber evidence="1">4.99.1.4</ecNumber>
        </recommendedName>
    </domain>
</protein>
<comment type="function">
    <text evidence="1">Multifunctional enzyme that catalyzes the SAM-dependent methylations of uroporphyrinogen III at position C-2 and C-7 to form precorrin-2 via precorrin-1. Then it catalyzes the NAD-dependent ring dehydrogenation of precorrin-2 to yield sirohydrochlorin. Finally, it catalyzes the ferrochelation of sirohydrochlorin to yield siroheme.</text>
</comment>
<comment type="catalytic activity">
    <reaction evidence="1">
        <text>uroporphyrinogen III + 2 S-adenosyl-L-methionine = precorrin-2 + 2 S-adenosyl-L-homocysteine + H(+)</text>
        <dbReference type="Rhea" id="RHEA:32459"/>
        <dbReference type="ChEBI" id="CHEBI:15378"/>
        <dbReference type="ChEBI" id="CHEBI:57308"/>
        <dbReference type="ChEBI" id="CHEBI:57856"/>
        <dbReference type="ChEBI" id="CHEBI:58827"/>
        <dbReference type="ChEBI" id="CHEBI:59789"/>
        <dbReference type="EC" id="2.1.1.107"/>
    </reaction>
</comment>
<comment type="catalytic activity">
    <reaction evidence="1">
        <text>precorrin-2 + NAD(+) = sirohydrochlorin + NADH + 2 H(+)</text>
        <dbReference type="Rhea" id="RHEA:15613"/>
        <dbReference type="ChEBI" id="CHEBI:15378"/>
        <dbReference type="ChEBI" id="CHEBI:57540"/>
        <dbReference type="ChEBI" id="CHEBI:57945"/>
        <dbReference type="ChEBI" id="CHEBI:58351"/>
        <dbReference type="ChEBI" id="CHEBI:58827"/>
        <dbReference type="EC" id="1.3.1.76"/>
    </reaction>
</comment>
<comment type="catalytic activity">
    <reaction evidence="1">
        <text>siroheme + 2 H(+) = sirohydrochlorin + Fe(2+)</text>
        <dbReference type="Rhea" id="RHEA:24360"/>
        <dbReference type="ChEBI" id="CHEBI:15378"/>
        <dbReference type="ChEBI" id="CHEBI:29033"/>
        <dbReference type="ChEBI" id="CHEBI:58351"/>
        <dbReference type="ChEBI" id="CHEBI:60052"/>
        <dbReference type="EC" id="4.99.1.4"/>
    </reaction>
</comment>
<comment type="pathway">
    <text evidence="1">Cofactor biosynthesis; adenosylcobalamin biosynthesis; precorrin-2 from uroporphyrinogen III: step 1/1.</text>
</comment>
<comment type="pathway">
    <text evidence="1">Cofactor biosynthesis; adenosylcobalamin biosynthesis; sirohydrochlorin from precorrin-2: step 1/1.</text>
</comment>
<comment type="pathway">
    <text evidence="1">Porphyrin-containing compound metabolism; siroheme biosynthesis; precorrin-2 from uroporphyrinogen III: step 1/1.</text>
</comment>
<comment type="pathway">
    <text evidence="1">Porphyrin-containing compound metabolism; siroheme biosynthesis; siroheme from sirohydrochlorin: step 1/1.</text>
</comment>
<comment type="pathway">
    <text evidence="1">Porphyrin-containing compound metabolism; siroheme biosynthesis; sirohydrochlorin from precorrin-2: step 1/1.</text>
</comment>
<comment type="similarity">
    <text evidence="1">In the N-terminal section; belongs to the precorrin-2 dehydrogenase / sirohydrochlorin ferrochelatase family.</text>
</comment>
<comment type="similarity">
    <text evidence="1">In the C-terminal section; belongs to the precorrin methyltransferase family.</text>
</comment>
<name>CYSG_ECOSM</name>
<keyword id="KW-0169">Cobalamin biosynthesis</keyword>
<keyword id="KW-0456">Lyase</keyword>
<keyword id="KW-0489">Methyltransferase</keyword>
<keyword id="KW-0511">Multifunctional enzyme</keyword>
<keyword id="KW-0520">NAD</keyword>
<keyword id="KW-0560">Oxidoreductase</keyword>
<keyword id="KW-0597">Phosphoprotein</keyword>
<keyword id="KW-0627">Porphyrin biosynthesis</keyword>
<keyword id="KW-0949">S-adenosyl-L-methionine</keyword>
<keyword id="KW-0808">Transferase</keyword>
<accession>B1LHG9</accession>
<evidence type="ECO:0000255" key="1">
    <source>
        <dbReference type="HAMAP-Rule" id="MF_01646"/>
    </source>
</evidence>
<feature type="chain" id="PRO_1000186946" description="Siroheme synthase">
    <location>
        <begin position="1"/>
        <end position="457"/>
    </location>
</feature>
<feature type="region of interest" description="Precorrin-2 dehydrogenase /sirohydrochlorin ferrochelatase" evidence="1">
    <location>
        <begin position="1"/>
        <end position="204"/>
    </location>
</feature>
<feature type="region of interest" description="Uroporphyrinogen-III C-methyltransferase" evidence="1">
    <location>
        <begin position="216"/>
        <end position="457"/>
    </location>
</feature>
<feature type="active site" description="Proton acceptor" evidence="1">
    <location>
        <position position="248"/>
    </location>
</feature>
<feature type="active site" description="Proton donor" evidence="1">
    <location>
        <position position="270"/>
    </location>
</feature>
<feature type="binding site" evidence="1">
    <location>
        <begin position="22"/>
        <end position="23"/>
    </location>
    <ligand>
        <name>NAD(+)</name>
        <dbReference type="ChEBI" id="CHEBI:57540"/>
    </ligand>
</feature>
<feature type="binding site" evidence="1">
    <location>
        <begin position="43"/>
        <end position="44"/>
    </location>
    <ligand>
        <name>NAD(+)</name>
        <dbReference type="ChEBI" id="CHEBI:57540"/>
    </ligand>
</feature>
<feature type="binding site" evidence="1">
    <location>
        <position position="225"/>
    </location>
    <ligand>
        <name>S-adenosyl-L-methionine</name>
        <dbReference type="ChEBI" id="CHEBI:59789"/>
    </ligand>
</feature>
<feature type="binding site" evidence="1">
    <location>
        <begin position="301"/>
        <end position="303"/>
    </location>
    <ligand>
        <name>S-adenosyl-L-methionine</name>
        <dbReference type="ChEBI" id="CHEBI:59789"/>
    </ligand>
</feature>
<feature type="binding site" evidence="1">
    <location>
        <position position="306"/>
    </location>
    <ligand>
        <name>S-adenosyl-L-methionine</name>
        <dbReference type="ChEBI" id="CHEBI:59789"/>
    </ligand>
</feature>
<feature type="binding site" evidence="1">
    <location>
        <begin position="331"/>
        <end position="332"/>
    </location>
    <ligand>
        <name>S-adenosyl-L-methionine</name>
        <dbReference type="ChEBI" id="CHEBI:59789"/>
    </ligand>
</feature>
<feature type="binding site" evidence="1">
    <location>
        <position position="382"/>
    </location>
    <ligand>
        <name>S-adenosyl-L-methionine</name>
        <dbReference type="ChEBI" id="CHEBI:59789"/>
    </ligand>
</feature>
<feature type="binding site" evidence="1">
    <location>
        <position position="411"/>
    </location>
    <ligand>
        <name>S-adenosyl-L-methionine</name>
        <dbReference type="ChEBI" id="CHEBI:59789"/>
    </ligand>
</feature>
<feature type="modified residue" description="Phosphoserine" evidence="1">
    <location>
        <position position="128"/>
    </location>
</feature>
<reference key="1">
    <citation type="journal article" date="2008" name="J. Bacteriol.">
        <title>Insights into the environmental resistance gene pool from the genome sequence of the multidrug-resistant environmental isolate Escherichia coli SMS-3-5.</title>
        <authorList>
            <person name="Fricke W.F."/>
            <person name="Wright M.S."/>
            <person name="Lindell A.H."/>
            <person name="Harkins D.M."/>
            <person name="Baker-Austin C."/>
            <person name="Ravel J."/>
            <person name="Stepanauskas R."/>
        </authorList>
    </citation>
    <scope>NUCLEOTIDE SEQUENCE [LARGE SCALE GENOMIC DNA]</scope>
    <source>
        <strain>SMS-3-5 / SECEC</strain>
    </source>
</reference>
<organism>
    <name type="scientific">Escherichia coli (strain SMS-3-5 / SECEC)</name>
    <dbReference type="NCBI Taxonomy" id="439855"/>
    <lineage>
        <taxon>Bacteria</taxon>
        <taxon>Pseudomonadati</taxon>
        <taxon>Pseudomonadota</taxon>
        <taxon>Gammaproteobacteria</taxon>
        <taxon>Enterobacterales</taxon>
        <taxon>Enterobacteriaceae</taxon>
        <taxon>Escherichia</taxon>
    </lineage>
</organism>
<proteinExistence type="inferred from homology"/>
<gene>
    <name evidence="1" type="primary">cysG</name>
    <name type="ordered locus">EcSMS35_3650</name>
</gene>
<dbReference type="EC" id="2.1.1.107" evidence="1"/>
<dbReference type="EC" id="1.3.1.76" evidence="1"/>
<dbReference type="EC" id="4.99.1.4" evidence="1"/>
<dbReference type="EMBL" id="CP000970">
    <property type="protein sequence ID" value="ACB16588.1"/>
    <property type="molecule type" value="Genomic_DNA"/>
</dbReference>
<dbReference type="RefSeq" id="WP_000349855.1">
    <property type="nucleotide sequence ID" value="NC_010498.1"/>
</dbReference>
<dbReference type="SMR" id="B1LHG9"/>
<dbReference type="GeneID" id="75173526"/>
<dbReference type="KEGG" id="ecm:EcSMS35_3650"/>
<dbReference type="HOGENOM" id="CLU_011276_2_0_6"/>
<dbReference type="UniPathway" id="UPA00148">
    <property type="reaction ID" value="UER00211"/>
</dbReference>
<dbReference type="UniPathway" id="UPA00148">
    <property type="reaction ID" value="UER00222"/>
</dbReference>
<dbReference type="UniPathway" id="UPA00262">
    <property type="reaction ID" value="UER00211"/>
</dbReference>
<dbReference type="UniPathway" id="UPA00262">
    <property type="reaction ID" value="UER00222"/>
</dbReference>
<dbReference type="UniPathway" id="UPA00262">
    <property type="reaction ID" value="UER00376"/>
</dbReference>
<dbReference type="Proteomes" id="UP000007011">
    <property type="component" value="Chromosome"/>
</dbReference>
<dbReference type="GO" id="GO:0051287">
    <property type="term" value="F:NAD binding"/>
    <property type="evidence" value="ECO:0007669"/>
    <property type="project" value="InterPro"/>
</dbReference>
<dbReference type="GO" id="GO:0043115">
    <property type="term" value="F:precorrin-2 dehydrogenase activity"/>
    <property type="evidence" value="ECO:0007669"/>
    <property type="project" value="UniProtKB-UniRule"/>
</dbReference>
<dbReference type="GO" id="GO:0051266">
    <property type="term" value="F:sirohydrochlorin ferrochelatase activity"/>
    <property type="evidence" value="ECO:0007669"/>
    <property type="project" value="UniProtKB-EC"/>
</dbReference>
<dbReference type="GO" id="GO:0004851">
    <property type="term" value="F:uroporphyrin-III C-methyltransferase activity"/>
    <property type="evidence" value="ECO:0007669"/>
    <property type="project" value="UniProtKB-UniRule"/>
</dbReference>
<dbReference type="GO" id="GO:0009236">
    <property type="term" value="P:cobalamin biosynthetic process"/>
    <property type="evidence" value="ECO:0007669"/>
    <property type="project" value="UniProtKB-UniRule"/>
</dbReference>
<dbReference type="GO" id="GO:0032259">
    <property type="term" value="P:methylation"/>
    <property type="evidence" value="ECO:0007669"/>
    <property type="project" value="UniProtKB-KW"/>
</dbReference>
<dbReference type="GO" id="GO:0019354">
    <property type="term" value="P:siroheme biosynthetic process"/>
    <property type="evidence" value="ECO:0007669"/>
    <property type="project" value="UniProtKB-UniRule"/>
</dbReference>
<dbReference type="CDD" id="cd11642">
    <property type="entry name" value="SUMT"/>
    <property type="match status" value="1"/>
</dbReference>
<dbReference type="FunFam" id="1.10.8.210:FF:000001">
    <property type="entry name" value="Siroheme synthase"/>
    <property type="match status" value="1"/>
</dbReference>
<dbReference type="FunFam" id="3.30.160.110:FF:000001">
    <property type="entry name" value="Siroheme synthase"/>
    <property type="match status" value="1"/>
</dbReference>
<dbReference type="FunFam" id="3.30.950.10:FF:000001">
    <property type="entry name" value="Siroheme synthase"/>
    <property type="match status" value="1"/>
</dbReference>
<dbReference type="FunFam" id="3.40.1010.10:FF:000001">
    <property type="entry name" value="Siroheme synthase"/>
    <property type="match status" value="1"/>
</dbReference>
<dbReference type="FunFam" id="3.40.50.720:FF:000092">
    <property type="entry name" value="Siroheme synthase"/>
    <property type="match status" value="1"/>
</dbReference>
<dbReference type="Gene3D" id="3.40.1010.10">
    <property type="entry name" value="Cobalt-precorrin-4 Transmethylase, Domain 1"/>
    <property type="match status" value="1"/>
</dbReference>
<dbReference type="Gene3D" id="3.30.950.10">
    <property type="entry name" value="Methyltransferase, Cobalt-precorrin-4 Transmethylase, Domain 2"/>
    <property type="match status" value="1"/>
</dbReference>
<dbReference type="Gene3D" id="3.40.50.720">
    <property type="entry name" value="NAD(P)-binding Rossmann-like Domain"/>
    <property type="match status" value="1"/>
</dbReference>
<dbReference type="Gene3D" id="1.10.8.210">
    <property type="entry name" value="Sirohaem synthase, dimerisation domain"/>
    <property type="match status" value="1"/>
</dbReference>
<dbReference type="Gene3D" id="3.30.160.110">
    <property type="entry name" value="Siroheme synthase, domain 2"/>
    <property type="match status" value="1"/>
</dbReference>
<dbReference type="HAMAP" id="MF_01646">
    <property type="entry name" value="Siroheme_synth"/>
    <property type="match status" value="1"/>
</dbReference>
<dbReference type="InterPro" id="IPR000878">
    <property type="entry name" value="4pyrrol_Mease"/>
</dbReference>
<dbReference type="InterPro" id="IPR035996">
    <property type="entry name" value="4pyrrol_Methylase_sf"/>
</dbReference>
<dbReference type="InterPro" id="IPR014777">
    <property type="entry name" value="4pyrrole_Mease_sub1"/>
</dbReference>
<dbReference type="InterPro" id="IPR014776">
    <property type="entry name" value="4pyrrole_Mease_sub2"/>
</dbReference>
<dbReference type="InterPro" id="IPR006366">
    <property type="entry name" value="CobA/CysG_C"/>
</dbReference>
<dbReference type="InterPro" id="IPR036291">
    <property type="entry name" value="NAD(P)-bd_dom_sf"/>
</dbReference>
<dbReference type="InterPro" id="IPR050161">
    <property type="entry name" value="Siro_Cobalamin_biosynth"/>
</dbReference>
<dbReference type="InterPro" id="IPR037115">
    <property type="entry name" value="Sirohaem_synt_dimer_dom_sf"/>
</dbReference>
<dbReference type="InterPro" id="IPR012409">
    <property type="entry name" value="Sirohaem_synth"/>
</dbReference>
<dbReference type="InterPro" id="IPR028281">
    <property type="entry name" value="Sirohaem_synthase_central"/>
</dbReference>
<dbReference type="InterPro" id="IPR019478">
    <property type="entry name" value="Sirohaem_synthase_dimer_dom"/>
</dbReference>
<dbReference type="InterPro" id="IPR006367">
    <property type="entry name" value="Sirohaem_synthase_N"/>
</dbReference>
<dbReference type="InterPro" id="IPR003043">
    <property type="entry name" value="Uropor_MeTrfase_CS"/>
</dbReference>
<dbReference type="NCBIfam" id="TIGR01469">
    <property type="entry name" value="cobA_cysG_Cterm"/>
    <property type="match status" value="1"/>
</dbReference>
<dbReference type="NCBIfam" id="TIGR01470">
    <property type="entry name" value="cysG_Nterm"/>
    <property type="match status" value="1"/>
</dbReference>
<dbReference type="NCBIfam" id="NF004790">
    <property type="entry name" value="PRK06136.1"/>
    <property type="match status" value="1"/>
</dbReference>
<dbReference type="NCBIfam" id="NF007922">
    <property type="entry name" value="PRK10637.1"/>
    <property type="match status" value="1"/>
</dbReference>
<dbReference type="PANTHER" id="PTHR45790:SF1">
    <property type="entry name" value="SIROHEME SYNTHASE"/>
    <property type="match status" value="1"/>
</dbReference>
<dbReference type="PANTHER" id="PTHR45790">
    <property type="entry name" value="SIROHEME SYNTHASE-RELATED"/>
    <property type="match status" value="1"/>
</dbReference>
<dbReference type="Pfam" id="PF10414">
    <property type="entry name" value="CysG_dimeriser"/>
    <property type="match status" value="1"/>
</dbReference>
<dbReference type="Pfam" id="PF13241">
    <property type="entry name" value="NAD_binding_7"/>
    <property type="match status" value="1"/>
</dbReference>
<dbReference type="Pfam" id="PF14824">
    <property type="entry name" value="Sirohm_synth_M"/>
    <property type="match status" value="1"/>
</dbReference>
<dbReference type="Pfam" id="PF00590">
    <property type="entry name" value="TP_methylase"/>
    <property type="match status" value="1"/>
</dbReference>
<dbReference type="PIRSF" id="PIRSF036426">
    <property type="entry name" value="Sirohaem_synth"/>
    <property type="match status" value="1"/>
</dbReference>
<dbReference type="SUPFAM" id="SSF51735">
    <property type="entry name" value="NAD(P)-binding Rossmann-fold domains"/>
    <property type="match status" value="1"/>
</dbReference>
<dbReference type="SUPFAM" id="SSF75615">
    <property type="entry name" value="Siroheme synthase middle domains-like"/>
    <property type="match status" value="1"/>
</dbReference>
<dbReference type="SUPFAM" id="SSF53790">
    <property type="entry name" value="Tetrapyrrole methylase"/>
    <property type="match status" value="1"/>
</dbReference>
<dbReference type="PROSITE" id="PS00839">
    <property type="entry name" value="SUMT_1"/>
    <property type="match status" value="1"/>
</dbReference>
<dbReference type="PROSITE" id="PS00840">
    <property type="entry name" value="SUMT_2"/>
    <property type="match status" value="1"/>
</dbReference>
<sequence>MDHLPIFCQLRDRDCLIVGGGDVAERKARLLLDAGARLTVNALAFIPQFTAWADAGMLTLVEGPFDESLLDTCWLAIAATDDDALNQRVSEAAEARRIFCNVVDAPKAASFIMPSIIDRSPLMVAVSSGGTSPVLARLLREKLESLLPLHLGQVAKYAGQLRGRVKQQFATMGERRRFWEKLFVNDRLAQSLANNDQKAITETTEQLINEPLDHRGEVVLVGAGPGDAGLLTLKGLQQIQQADVVVYDRLVSDDIMNLVRRDADRVFVGKRAGYHCVPQEEINQILLREAQKGKRVVRLKGGDPFIFGRGGEELETLCNAGIPFSVVPGITAASGCSAYSGIPLTHRDYAQSVRLITGHLKTGGELDWENLAAEKQTLVFYMGLNQAATIQQKLIEHGMPGEMPVAIVENGTAVTQRVIDGTLTQLGELAQQMNSPSLIIIGRVVGLRDKLNWFSNH</sequence>